<organism>
    <name type="scientific">Geobacillus sp. (strain WCH70)</name>
    <dbReference type="NCBI Taxonomy" id="471223"/>
    <lineage>
        <taxon>Bacteria</taxon>
        <taxon>Bacillati</taxon>
        <taxon>Bacillota</taxon>
        <taxon>Bacilli</taxon>
        <taxon>Bacillales</taxon>
        <taxon>Anoxybacillaceae</taxon>
        <taxon>Geobacillus</taxon>
    </lineage>
</organism>
<protein>
    <recommendedName>
        <fullName evidence="1">Imidazole glycerol phosphate synthase subunit HisF</fullName>
        <ecNumber evidence="1">4.3.2.10</ecNumber>
    </recommendedName>
    <alternativeName>
        <fullName evidence="1">IGP synthase cyclase subunit</fullName>
    </alternativeName>
    <alternativeName>
        <fullName evidence="1">IGP synthase subunit HisF</fullName>
    </alternativeName>
    <alternativeName>
        <fullName evidence="1">ImGP synthase subunit HisF</fullName>
        <shortName evidence="1">IGPS subunit HisF</shortName>
    </alternativeName>
</protein>
<comment type="function">
    <text evidence="1">IGPS catalyzes the conversion of PRFAR and glutamine to IGP, AICAR and glutamate. The HisF subunit catalyzes the cyclization activity that produces IGP and AICAR from PRFAR using the ammonia provided by the HisH subunit.</text>
</comment>
<comment type="catalytic activity">
    <reaction evidence="1">
        <text>5-[(5-phospho-1-deoxy-D-ribulos-1-ylimino)methylamino]-1-(5-phospho-beta-D-ribosyl)imidazole-4-carboxamide + L-glutamine = D-erythro-1-(imidazol-4-yl)glycerol 3-phosphate + 5-amino-1-(5-phospho-beta-D-ribosyl)imidazole-4-carboxamide + L-glutamate + H(+)</text>
        <dbReference type="Rhea" id="RHEA:24793"/>
        <dbReference type="ChEBI" id="CHEBI:15378"/>
        <dbReference type="ChEBI" id="CHEBI:29985"/>
        <dbReference type="ChEBI" id="CHEBI:58278"/>
        <dbReference type="ChEBI" id="CHEBI:58359"/>
        <dbReference type="ChEBI" id="CHEBI:58475"/>
        <dbReference type="ChEBI" id="CHEBI:58525"/>
        <dbReference type="EC" id="4.3.2.10"/>
    </reaction>
</comment>
<comment type="pathway">
    <text evidence="1">Amino-acid biosynthesis; L-histidine biosynthesis; L-histidine from 5-phospho-alpha-D-ribose 1-diphosphate: step 5/9.</text>
</comment>
<comment type="subunit">
    <text evidence="1">Heterodimer of HisH and HisF.</text>
</comment>
<comment type="subcellular location">
    <subcellularLocation>
        <location evidence="1">Cytoplasm</location>
    </subcellularLocation>
</comment>
<comment type="similarity">
    <text evidence="1">Belongs to the HisA/HisF family.</text>
</comment>
<evidence type="ECO:0000255" key="1">
    <source>
        <dbReference type="HAMAP-Rule" id="MF_01013"/>
    </source>
</evidence>
<feature type="chain" id="PRO_1000213212" description="Imidazole glycerol phosphate synthase subunit HisF">
    <location>
        <begin position="1"/>
        <end position="252"/>
    </location>
</feature>
<feature type="active site" evidence="1">
    <location>
        <position position="11"/>
    </location>
</feature>
<feature type="active site" evidence="1">
    <location>
        <position position="130"/>
    </location>
</feature>
<accession>C5D7N8</accession>
<sequence>MITKRIIPCLDVKDGRVVKGVQFVQLRDAGDPVELAKFYDKQGADELVFLDISASHEGRKTMVEVVEKVAAQLAIPFTVGGGINSLDDMKTILRAGADKVSLNTAAVRNPNLITEGADFFGSQCIVVAIDAKYDETIGSWRVYTHGGRNATDLEVVEWAKEAVRRGAGEILLTSMDCDGEKNGFDIALTRTVSEAVSVPVIASGGAGNAKHFLEVFEKGKADAALAASIFHYKETSVKEVKAYLKERGVNIR</sequence>
<proteinExistence type="inferred from homology"/>
<name>HIS6_GEOSW</name>
<gene>
    <name evidence="1" type="primary">hisF</name>
    <name type="ordered locus">GWCH70_2975</name>
</gene>
<keyword id="KW-0028">Amino-acid biosynthesis</keyword>
<keyword id="KW-0963">Cytoplasm</keyword>
<keyword id="KW-0368">Histidine biosynthesis</keyword>
<keyword id="KW-0456">Lyase</keyword>
<dbReference type="EC" id="4.3.2.10" evidence="1"/>
<dbReference type="EMBL" id="CP001638">
    <property type="protein sequence ID" value="ACS25648.1"/>
    <property type="molecule type" value="Genomic_DNA"/>
</dbReference>
<dbReference type="SMR" id="C5D7N8"/>
<dbReference type="STRING" id="471223.GWCH70_2975"/>
<dbReference type="KEGG" id="gwc:GWCH70_2975"/>
<dbReference type="eggNOG" id="COG0107">
    <property type="taxonomic scope" value="Bacteria"/>
</dbReference>
<dbReference type="HOGENOM" id="CLU_048577_4_0_9"/>
<dbReference type="OrthoDB" id="9781903at2"/>
<dbReference type="UniPathway" id="UPA00031">
    <property type="reaction ID" value="UER00010"/>
</dbReference>
<dbReference type="GO" id="GO:0005737">
    <property type="term" value="C:cytoplasm"/>
    <property type="evidence" value="ECO:0007669"/>
    <property type="project" value="UniProtKB-SubCell"/>
</dbReference>
<dbReference type="GO" id="GO:0000107">
    <property type="term" value="F:imidazoleglycerol-phosphate synthase activity"/>
    <property type="evidence" value="ECO:0007669"/>
    <property type="project" value="UniProtKB-UniRule"/>
</dbReference>
<dbReference type="GO" id="GO:0016829">
    <property type="term" value="F:lyase activity"/>
    <property type="evidence" value="ECO:0007669"/>
    <property type="project" value="UniProtKB-KW"/>
</dbReference>
<dbReference type="GO" id="GO:0000105">
    <property type="term" value="P:L-histidine biosynthetic process"/>
    <property type="evidence" value="ECO:0007669"/>
    <property type="project" value="UniProtKB-UniRule"/>
</dbReference>
<dbReference type="CDD" id="cd04731">
    <property type="entry name" value="HisF"/>
    <property type="match status" value="1"/>
</dbReference>
<dbReference type="FunFam" id="3.20.20.70:FF:000006">
    <property type="entry name" value="Imidazole glycerol phosphate synthase subunit HisF"/>
    <property type="match status" value="1"/>
</dbReference>
<dbReference type="Gene3D" id="3.20.20.70">
    <property type="entry name" value="Aldolase class I"/>
    <property type="match status" value="1"/>
</dbReference>
<dbReference type="HAMAP" id="MF_01013">
    <property type="entry name" value="HisF"/>
    <property type="match status" value="1"/>
</dbReference>
<dbReference type="InterPro" id="IPR013785">
    <property type="entry name" value="Aldolase_TIM"/>
</dbReference>
<dbReference type="InterPro" id="IPR006062">
    <property type="entry name" value="His_biosynth"/>
</dbReference>
<dbReference type="InterPro" id="IPR004651">
    <property type="entry name" value="HisF"/>
</dbReference>
<dbReference type="InterPro" id="IPR050064">
    <property type="entry name" value="IGPS_HisA/HisF"/>
</dbReference>
<dbReference type="InterPro" id="IPR011060">
    <property type="entry name" value="RibuloseP-bd_barrel"/>
</dbReference>
<dbReference type="NCBIfam" id="TIGR00735">
    <property type="entry name" value="hisF"/>
    <property type="match status" value="1"/>
</dbReference>
<dbReference type="PANTHER" id="PTHR21235:SF2">
    <property type="entry name" value="IMIDAZOLE GLYCEROL PHOSPHATE SYNTHASE HISHF"/>
    <property type="match status" value="1"/>
</dbReference>
<dbReference type="PANTHER" id="PTHR21235">
    <property type="entry name" value="IMIDAZOLE GLYCEROL PHOSPHATE SYNTHASE SUBUNIT HISF/H IGP SYNTHASE SUBUNIT HISF/H"/>
    <property type="match status" value="1"/>
</dbReference>
<dbReference type="Pfam" id="PF00977">
    <property type="entry name" value="His_biosynth"/>
    <property type="match status" value="1"/>
</dbReference>
<dbReference type="SUPFAM" id="SSF51366">
    <property type="entry name" value="Ribulose-phoshate binding barrel"/>
    <property type="match status" value="1"/>
</dbReference>
<reference key="1">
    <citation type="submission" date="2009-06" db="EMBL/GenBank/DDBJ databases">
        <title>Complete sequence of chromosome of Geopacillus sp. WCH70.</title>
        <authorList>
            <consortium name="US DOE Joint Genome Institute"/>
            <person name="Lucas S."/>
            <person name="Copeland A."/>
            <person name="Lapidus A."/>
            <person name="Glavina del Rio T."/>
            <person name="Dalin E."/>
            <person name="Tice H."/>
            <person name="Bruce D."/>
            <person name="Goodwin L."/>
            <person name="Pitluck S."/>
            <person name="Chertkov O."/>
            <person name="Brettin T."/>
            <person name="Detter J.C."/>
            <person name="Han C."/>
            <person name="Larimer F."/>
            <person name="Land M."/>
            <person name="Hauser L."/>
            <person name="Kyrpides N."/>
            <person name="Mikhailova N."/>
            <person name="Brumm P."/>
            <person name="Mead D.A."/>
            <person name="Richardson P."/>
        </authorList>
    </citation>
    <scope>NUCLEOTIDE SEQUENCE [LARGE SCALE GENOMIC DNA]</scope>
    <source>
        <strain>WCH70</strain>
    </source>
</reference>